<comment type="function">
    <text evidence="3 5">Regulates chlorophyll synthesis and plastid-to-nucleus signal transduction by binding both the product and the substrate of Mg-chelatase, an enzyme that produces magnesium-protoporphyrin IX (Mg-Proto). Also activates Mg-chelatase. Neither binds abscisic acid (ABA) nor is involved in ABA signaling.</text>
</comment>
<comment type="subunit">
    <text evidence="3">Interacts with CHLH, the protoporphyrin IX-binding subunit of Mg-chelatase. Monomer or extremely compact dimer.</text>
</comment>
<comment type="subcellular location">
    <subcellularLocation>
        <location evidence="3">Plastid</location>
        <location evidence="3">Chloroplast membrane</location>
        <topology evidence="3">Peripheral membrane protein</topology>
    </subcellularLocation>
    <text>Might be bound to membranes by specific protein-protein interactions.</text>
</comment>
<comment type="induction">
    <text evidence="4">Up-regulated by light.</text>
</comment>
<reference key="1">
    <citation type="journal article" date="2000" name="Nature">
        <title>Sequence and analysis of chromosome 3 of the plant Arabidopsis thaliana.</title>
        <authorList>
            <person name="Salanoubat M."/>
            <person name="Lemcke K."/>
            <person name="Rieger M."/>
            <person name="Ansorge W."/>
            <person name="Unseld M."/>
            <person name="Fartmann B."/>
            <person name="Valle G."/>
            <person name="Bloecker H."/>
            <person name="Perez-Alonso M."/>
            <person name="Obermaier B."/>
            <person name="Delseny M."/>
            <person name="Boutry M."/>
            <person name="Grivell L.A."/>
            <person name="Mache R."/>
            <person name="Puigdomenech P."/>
            <person name="De Simone V."/>
            <person name="Choisne N."/>
            <person name="Artiguenave F."/>
            <person name="Robert C."/>
            <person name="Brottier P."/>
            <person name="Wincker P."/>
            <person name="Cattolico L."/>
            <person name="Weissenbach J."/>
            <person name="Saurin W."/>
            <person name="Quetier F."/>
            <person name="Schaefer M."/>
            <person name="Mueller-Auer S."/>
            <person name="Gabel C."/>
            <person name="Fuchs M."/>
            <person name="Benes V."/>
            <person name="Wurmbach E."/>
            <person name="Drzonek H."/>
            <person name="Erfle H."/>
            <person name="Jordan N."/>
            <person name="Bangert S."/>
            <person name="Wiedelmann R."/>
            <person name="Kranz H."/>
            <person name="Voss H."/>
            <person name="Holland R."/>
            <person name="Brandt P."/>
            <person name="Nyakatura G."/>
            <person name="Vezzi A."/>
            <person name="D'Angelo M."/>
            <person name="Pallavicini A."/>
            <person name="Toppo S."/>
            <person name="Simionati B."/>
            <person name="Conrad A."/>
            <person name="Hornischer K."/>
            <person name="Kauer G."/>
            <person name="Loehnert T.-H."/>
            <person name="Nordsiek G."/>
            <person name="Reichelt J."/>
            <person name="Scharfe M."/>
            <person name="Schoen O."/>
            <person name="Bargues M."/>
            <person name="Terol J."/>
            <person name="Climent J."/>
            <person name="Navarro P."/>
            <person name="Collado C."/>
            <person name="Perez-Perez A."/>
            <person name="Ottenwaelder B."/>
            <person name="Duchemin D."/>
            <person name="Cooke R."/>
            <person name="Laudie M."/>
            <person name="Berger-Llauro C."/>
            <person name="Purnelle B."/>
            <person name="Masuy D."/>
            <person name="de Haan M."/>
            <person name="Maarse A.C."/>
            <person name="Alcaraz J.-P."/>
            <person name="Cottet A."/>
            <person name="Casacuberta E."/>
            <person name="Monfort A."/>
            <person name="Argiriou A."/>
            <person name="Flores M."/>
            <person name="Liguori R."/>
            <person name="Vitale D."/>
            <person name="Mannhaupt G."/>
            <person name="Haase D."/>
            <person name="Schoof H."/>
            <person name="Rudd S."/>
            <person name="Zaccaria P."/>
            <person name="Mewes H.-W."/>
            <person name="Mayer K.F.X."/>
            <person name="Kaul S."/>
            <person name="Town C.D."/>
            <person name="Koo H.L."/>
            <person name="Tallon L.J."/>
            <person name="Jenkins J."/>
            <person name="Rooney T."/>
            <person name="Rizzo M."/>
            <person name="Walts A."/>
            <person name="Utterback T."/>
            <person name="Fujii C.Y."/>
            <person name="Shea T.P."/>
            <person name="Creasy T.H."/>
            <person name="Haas B."/>
            <person name="Maiti R."/>
            <person name="Wu D."/>
            <person name="Peterson J."/>
            <person name="Van Aken S."/>
            <person name="Pai G."/>
            <person name="Militscher J."/>
            <person name="Sellers P."/>
            <person name="Gill J.E."/>
            <person name="Feldblyum T.V."/>
            <person name="Preuss D."/>
            <person name="Lin X."/>
            <person name="Nierman W.C."/>
            <person name="Salzberg S.L."/>
            <person name="White O."/>
            <person name="Venter J.C."/>
            <person name="Fraser C.M."/>
            <person name="Kaneko T."/>
            <person name="Nakamura Y."/>
            <person name="Sato S."/>
            <person name="Kato T."/>
            <person name="Asamizu E."/>
            <person name="Sasamoto S."/>
            <person name="Kimura T."/>
            <person name="Idesawa K."/>
            <person name="Kawashima K."/>
            <person name="Kishida Y."/>
            <person name="Kiyokawa C."/>
            <person name="Kohara M."/>
            <person name="Matsumoto M."/>
            <person name="Matsuno A."/>
            <person name="Muraki A."/>
            <person name="Nakayama S."/>
            <person name="Nakazaki N."/>
            <person name="Shinpo S."/>
            <person name="Takeuchi C."/>
            <person name="Wada T."/>
            <person name="Watanabe A."/>
            <person name="Yamada M."/>
            <person name="Yasuda M."/>
            <person name="Tabata S."/>
        </authorList>
    </citation>
    <scope>NUCLEOTIDE SEQUENCE [LARGE SCALE GENOMIC DNA]</scope>
    <source>
        <strain>cv. Columbia</strain>
    </source>
</reference>
<reference key="2">
    <citation type="journal article" date="2017" name="Plant J.">
        <title>Araport11: a complete reannotation of the Arabidopsis thaliana reference genome.</title>
        <authorList>
            <person name="Cheng C.Y."/>
            <person name="Krishnakumar V."/>
            <person name="Chan A.P."/>
            <person name="Thibaud-Nissen F."/>
            <person name="Schobel S."/>
            <person name="Town C.D."/>
        </authorList>
    </citation>
    <scope>GENOME REANNOTATION</scope>
    <source>
        <strain>cv. Columbia</strain>
    </source>
</reference>
<reference key="3">
    <citation type="journal article" date="2003" name="Science">
        <title>Empirical analysis of transcriptional activity in the Arabidopsis genome.</title>
        <authorList>
            <person name="Yamada K."/>
            <person name="Lim J."/>
            <person name="Dale J.M."/>
            <person name="Chen H."/>
            <person name="Shinn P."/>
            <person name="Palm C.J."/>
            <person name="Southwick A.M."/>
            <person name="Wu H.C."/>
            <person name="Kim C.J."/>
            <person name="Nguyen M."/>
            <person name="Pham P.K."/>
            <person name="Cheuk R.F."/>
            <person name="Karlin-Newmann G."/>
            <person name="Liu S.X."/>
            <person name="Lam B."/>
            <person name="Sakano H."/>
            <person name="Wu T."/>
            <person name="Yu G."/>
            <person name="Miranda M."/>
            <person name="Quach H.L."/>
            <person name="Tripp M."/>
            <person name="Chang C.H."/>
            <person name="Lee J.M."/>
            <person name="Toriumi M.J."/>
            <person name="Chan M.M."/>
            <person name="Tang C.C."/>
            <person name="Onodera C.S."/>
            <person name="Deng J.M."/>
            <person name="Akiyama K."/>
            <person name="Ansari Y."/>
            <person name="Arakawa T."/>
            <person name="Banh J."/>
            <person name="Banno F."/>
            <person name="Bowser L."/>
            <person name="Brooks S.Y."/>
            <person name="Carninci P."/>
            <person name="Chao Q."/>
            <person name="Choy N."/>
            <person name="Enju A."/>
            <person name="Goldsmith A.D."/>
            <person name="Gurjal M."/>
            <person name="Hansen N.F."/>
            <person name="Hayashizaki Y."/>
            <person name="Johnson-Hopson C."/>
            <person name="Hsuan V.W."/>
            <person name="Iida K."/>
            <person name="Karnes M."/>
            <person name="Khan S."/>
            <person name="Koesema E."/>
            <person name="Ishida J."/>
            <person name="Jiang P.X."/>
            <person name="Jones T."/>
            <person name="Kawai J."/>
            <person name="Kamiya A."/>
            <person name="Meyers C."/>
            <person name="Nakajima M."/>
            <person name="Narusaka M."/>
            <person name="Seki M."/>
            <person name="Sakurai T."/>
            <person name="Satou M."/>
            <person name="Tamse R."/>
            <person name="Vaysberg M."/>
            <person name="Wallender E.K."/>
            <person name="Wong C."/>
            <person name="Yamamura Y."/>
            <person name="Yuan S."/>
            <person name="Shinozaki K."/>
            <person name="Davis R.W."/>
            <person name="Theologis A."/>
            <person name="Ecker J.R."/>
        </authorList>
    </citation>
    <scope>NUCLEOTIDE SEQUENCE [LARGE SCALE MRNA]</scope>
    <source>
        <strain>cv. Columbia</strain>
    </source>
</reference>
<reference key="4">
    <citation type="journal article" date="2003" name="Science">
        <title>GUN4, a regulator of chlorophyll synthesis and intracellular signaling.</title>
        <authorList>
            <person name="Larkin R.M."/>
            <person name="Alonso J.M."/>
            <person name="Ecker J.R."/>
            <person name="Chory J."/>
        </authorList>
    </citation>
    <scope>FUNCTION</scope>
    <scope>SUBCELLULAR LOCATION</scope>
    <scope>INTERACTION WITH CHLH</scope>
    <scope>MUTANT GUN4-1</scope>
</reference>
<reference key="5">
    <citation type="journal article" date="2008" name="Photochem. Photobiol. Sci.">
        <title>Light signalling pathways regulating the Mg-chelatase branchpoint of chlorophyll synthesis during de-etiolation in Arabidopsis thaliana.</title>
        <authorList>
            <person name="Stephenson P.G."/>
            <person name="Terry M.J."/>
        </authorList>
    </citation>
    <scope>INDUCTION BY LIGHT</scope>
</reference>
<reference key="6">
    <citation type="journal article" date="2009" name="Plant Physiol.">
        <title>Large-scale Arabidopsis phosphoproteome profiling reveals novel chloroplast kinase substrates and phosphorylation networks.</title>
        <authorList>
            <person name="Reiland S."/>
            <person name="Messerli G."/>
            <person name="Baerenfaller K."/>
            <person name="Gerrits B."/>
            <person name="Endler A."/>
            <person name="Grossmann J."/>
            <person name="Gruissem W."/>
            <person name="Baginsky S."/>
        </authorList>
    </citation>
    <scope>IDENTIFICATION BY MASS SPECTROMETRY [LARGE SCALE ANALYSIS]</scope>
</reference>
<reference key="7">
    <citation type="journal article" date="2012" name="Plant Mol. Biol.">
        <title>Roles of the different components of magnesium chelatase in abscisic acid signal transduction.</title>
        <authorList>
            <person name="Du S.Y."/>
            <person name="Zhang X.F."/>
            <person name="Lu Z."/>
            <person name="Xin Q."/>
            <person name="Wu Z."/>
            <person name="Jiang T."/>
            <person name="Lu Y."/>
            <person name="Wang X.F."/>
            <person name="Zhang D.P."/>
        </authorList>
    </citation>
    <scope>FUNCTION</scope>
</reference>
<sequence length="265" mass="29665">MATTNSLHHHHHSSPSYTHHRNNLHCQSHFGPTSLSLKQPTSAATFSLICSASSTSSSTTAVSAVSTTNASATTAETATIFDVLENHLVNQNFRQADEETRRLLIQISGEAAVKRGYVFFSEVKTISPEDLQAIDNLWIKHSDGRFGYSVQRKIWLKVKKDFTRFFVKVEWMKLLDTEVVQYNYRAFPDEFKWELNDETPLGHLPLTNALRGTQLLKCVLSHPAFATADDNSGETEDELNRGVAVAKEQAGVGADKRVFKTNYSF</sequence>
<proteinExistence type="evidence at protein level"/>
<protein>
    <recommendedName>
        <fullName>Tetrapyrrole-binding protein, chloroplastic</fullName>
    </recommendedName>
    <alternativeName>
        <fullName>Genomes uncoupled 4</fullName>
    </alternativeName>
</protein>
<gene>
    <name type="primary">GUN4</name>
    <name type="ordered locus">At3g59400</name>
    <name type="ORF">F25L23_260</name>
</gene>
<feature type="transit peptide" description="Chloroplast" evidence="1">
    <location>
        <begin position="1"/>
        <end position="69"/>
    </location>
</feature>
<feature type="chain" id="PRO_0000021389" description="Tetrapyrrole-binding protein, chloroplastic">
    <location>
        <begin position="70"/>
        <end position="265"/>
    </location>
</feature>
<feature type="region of interest" description="Disordered" evidence="2">
    <location>
        <begin position="1"/>
        <end position="24"/>
    </location>
</feature>
<feature type="compositionally biased region" description="Basic residues" evidence="2">
    <location>
        <begin position="7"/>
        <end position="23"/>
    </location>
</feature>
<feature type="mutagenesis site" description="In gun4-1; decreases the protein stability.">
    <original>L</original>
    <variation>F</variation>
    <location>
        <position position="88"/>
    </location>
</feature>
<feature type="sequence conflict" description="In Ref. 3; AAL36274." evidence="6" ref="3">
    <original>G</original>
    <variation>E</variation>
    <location>
        <position position="251"/>
    </location>
</feature>
<feature type="helix" evidence="7">
    <location>
        <begin position="82"/>
        <end position="89"/>
    </location>
</feature>
<feature type="helix" evidence="7">
    <location>
        <begin position="93"/>
        <end position="106"/>
    </location>
</feature>
<feature type="helix" evidence="7">
    <location>
        <begin position="110"/>
        <end position="115"/>
    </location>
</feature>
<feature type="helix" evidence="7">
    <location>
        <begin position="120"/>
        <end position="125"/>
    </location>
</feature>
<feature type="helix" evidence="7">
    <location>
        <begin position="128"/>
        <end position="140"/>
    </location>
</feature>
<feature type="turn" evidence="7">
    <location>
        <begin position="141"/>
        <end position="144"/>
    </location>
</feature>
<feature type="strand" evidence="7">
    <location>
        <begin position="145"/>
        <end position="147"/>
    </location>
</feature>
<feature type="helix" evidence="7">
    <location>
        <begin position="148"/>
        <end position="157"/>
    </location>
</feature>
<feature type="turn" evidence="7">
    <location>
        <begin position="158"/>
        <end position="160"/>
    </location>
</feature>
<feature type="helix" evidence="7">
    <location>
        <begin position="162"/>
        <end position="168"/>
    </location>
</feature>
<feature type="helix" evidence="7">
    <location>
        <begin position="209"/>
        <end position="211"/>
    </location>
</feature>
<feature type="helix" evidence="7">
    <location>
        <begin position="214"/>
        <end position="220"/>
    </location>
</feature>
<feature type="helix" evidence="7">
    <location>
        <begin position="223"/>
        <end position="225"/>
    </location>
</feature>
<dbReference type="EMBL" id="AL356014">
    <property type="protein sequence ID" value="CAB91610.1"/>
    <property type="molecule type" value="Genomic_DNA"/>
</dbReference>
<dbReference type="EMBL" id="CP002686">
    <property type="protein sequence ID" value="AEE79917.1"/>
    <property type="molecule type" value="Genomic_DNA"/>
</dbReference>
<dbReference type="EMBL" id="AY063918">
    <property type="protein sequence ID" value="AAL36274.1"/>
    <property type="molecule type" value="mRNA"/>
</dbReference>
<dbReference type="EMBL" id="AY150510">
    <property type="protein sequence ID" value="AAN13026.1"/>
    <property type="molecule type" value="mRNA"/>
</dbReference>
<dbReference type="PIR" id="T49008">
    <property type="entry name" value="T49008"/>
</dbReference>
<dbReference type="RefSeq" id="NP_191499.1">
    <property type="nucleotide sequence ID" value="NM_115802.4"/>
</dbReference>
<dbReference type="PDB" id="7E2R">
    <property type="method" value="X-ray"/>
    <property type="resolution" value="2.30 A"/>
    <property type="chains" value="A/B=70-265"/>
</dbReference>
<dbReference type="PDBsum" id="7E2R"/>
<dbReference type="SMR" id="Q9LX31"/>
<dbReference type="BioGRID" id="10424">
    <property type="interactions" value="1"/>
</dbReference>
<dbReference type="FunCoup" id="Q9LX31">
    <property type="interactions" value="243"/>
</dbReference>
<dbReference type="STRING" id="3702.Q9LX31"/>
<dbReference type="iPTMnet" id="Q9LX31"/>
<dbReference type="PaxDb" id="3702-AT3G59400.1"/>
<dbReference type="ProteomicsDB" id="230175"/>
<dbReference type="EnsemblPlants" id="AT3G59400.1">
    <property type="protein sequence ID" value="AT3G59400.1"/>
    <property type="gene ID" value="AT3G59400"/>
</dbReference>
<dbReference type="GeneID" id="825109"/>
<dbReference type="Gramene" id="AT3G59400.1">
    <property type="protein sequence ID" value="AT3G59400.1"/>
    <property type="gene ID" value="AT3G59400"/>
</dbReference>
<dbReference type="KEGG" id="ath:AT3G59400"/>
<dbReference type="Araport" id="AT3G59400"/>
<dbReference type="TAIR" id="AT3G59400">
    <property type="gene designation" value="GUN4"/>
</dbReference>
<dbReference type="eggNOG" id="ENOG502QWGS">
    <property type="taxonomic scope" value="Eukaryota"/>
</dbReference>
<dbReference type="HOGENOM" id="CLU_067449_0_0_1"/>
<dbReference type="InParanoid" id="Q9LX31"/>
<dbReference type="OMA" id="CQSHFGP"/>
<dbReference type="OrthoDB" id="4835at2759"/>
<dbReference type="PhylomeDB" id="Q9LX31"/>
<dbReference type="PRO" id="PR:Q9LX31"/>
<dbReference type="Proteomes" id="UP000006548">
    <property type="component" value="Chromosome 3"/>
</dbReference>
<dbReference type="ExpressionAtlas" id="Q9LX31">
    <property type="expression patterns" value="baseline and differential"/>
</dbReference>
<dbReference type="GO" id="GO:0009507">
    <property type="term" value="C:chloroplast"/>
    <property type="evidence" value="ECO:0000314"/>
    <property type="project" value="TAIR"/>
</dbReference>
<dbReference type="GO" id="GO:0031969">
    <property type="term" value="C:chloroplast membrane"/>
    <property type="evidence" value="ECO:0007669"/>
    <property type="project" value="UniProtKB-SubCell"/>
</dbReference>
<dbReference type="GO" id="GO:0019899">
    <property type="term" value="F:enzyme binding"/>
    <property type="evidence" value="ECO:0000353"/>
    <property type="project" value="TAIR"/>
</dbReference>
<dbReference type="GO" id="GO:0046906">
    <property type="term" value="F:tetrapyrrole binding"/>
    <property type="evidence" value="ECO:0000314"/>
    <property type="project" value="TAIR"/>
</dbReference>
<dbReference type="GO" id="GO:0015995">
    <property type="term" value="P:chlorophyll biosynthetic process"/>
    <property type="evidence" value="ECO:0000304"/>
    <property type="project" value="TAIR"/>
</dbReference>
<dbReference type="GO" id="GO:0010019">
    <property type="term" value="P:chloroplast-nucleus signaling pathway"/>
    <property type="evidence" value="ECO:0000315"/>
    <property type="project" value="TAIR"/>
</dbReference>
<dbReference type="GO" id="GO:0043085">
    <property type="term" value="P:positive regulation of catalytic activity"/>
    <property type="evidence" value="ECO:0000304"/>
    <property type="project" value="TAIR"/>
</dbReference>
<dbReference type="CDD" id="cd16383">
    <property type="entry name" value="GUN4"/>
    <property type="match status" value="1"/>
</dbReference>
<dbReference type="FunFam" id="1.25.40.620:FF:000002">
    <property type="entry name" value="GUN4 mutant"/>
    <property type="match status" value="1"/>
</dbReference>
<dbReference type="FunFam" id="1.10.10.1770:FF:000001">
    <property type="entry name" value="Tetrapyrrole-binding protein, chloroplastic"/>
    <property type="match status" value="1"/>
</dbReference>
<dbReference type="Gene3D" id="1.25.40.620">
    <property type="match status" value="1"/>
</dbReference>
<dbReference type="Gene3D" id="1.10.10.1770">
    <property type="entry name" value="Gun4-like"/>
    <property type="match status" value="1"/>
</dbReference>
<dbReference type="InterPro" id="IPR008629">
    <property type="entry name" value="GUN4-like"/>
</dbReference>
<dbReference type="InterPro" id="IPR037215">
    <property type="entry name" value="GUN4-like_sf"/>
</dbReference>
<dbReference type="PANTHER" id="PTHR34800">
    <property type="entry name" value="TETRAPYRROLE-BINDING PROTEIN, CHLOROPLASTIC"/>
    <property type="match status" value="1"/>
</dbReference>
<dbReference type="PANTHER" id="PTHR34800:SF1">
    <property type="entry name" value="TETRAPYRROLE-BINDING PROTEIN, CHLOROPLASTIC"/>
    <property type="match status" value="1"/>
</dbReference>
<dbReference type="Pfam" id="PF05419">
    <property type="entry name" value="GUN4"/>
    <property type="match status" value="1"/>
</dbReference>
<dbReference type="SUPFAM" id="SSF140869">
    <property type="entry name" value="GUN4-like"/>
    <property type="match status" value="1"/>
</dbReference>
<evidence type="ECO:0000255" key="1"/>
<evidence type="ECO:0000256" key="2">
    <source>
        <dbReference type="SAM" id="MobiDB-lite"/>
    </source>
</evidence>
<evidence type="ECO:0000269" key="3">
    <source>
    </source>
</evidence>
<evidence type="ECO:0000269" key="4">
    <source>
    </source>
</evidence>
<evidence type="ECO:0000269" key="5">
    <source>
    </source>
</evidence>
<evidence type="ECO:0000305" key="6"/>
<evidence type="ECO:0007829" key="7">
    <source>
        <dbReference type="PDB" id="7E2R"/>
    </source>
</evidence>
<keyword id="KW-0002">3D-structure</keyword>
<keyword id="KW-0149">Chlorophyll biosynthesis</keyword>
<keyword id="KW-0150">Chloroplast</keyword>
<keyword id="KW-0472">Membrane</keyword>
<keyword id="KW-0934">Plastid</keyword>
<keyword id="KW-1185">Reference proteome</keyword>
<keyword id="KW-0809">Transit peptide</keyword>
<organism>
    <name type="scientific">Arabidopsis thaliana</name>
    <name type="common">Mouse-ear cress</name>
    <dbReference type="NCBI Taxonomy" id="3702"/>
    <lineage>
        <taxon>Eukaryota</taxon>
        <taxon>Viridiplantae</taxon>
        <taxon>Streptophyta</taxon>
        <taxon>Embryophyta</taxon>
        <taxon>Tracheophyta</taxon>
        <taxon>Spermatophyta</taxon>
        <taxon>Magnoliopsida</taxon>
        <taxon>eudicotyledons</taxon>
        <taxon>Gunneridae</taxon>
        <taxon>Pentapetalae</taxon>
        <taxon>rosids</taxon>
        <taxon>malvids</taxon>
        <taxon>Brassicales</taxon>
        <taxon>Brassicaceae</taxon>
        <taxon>Camelineae</taxon>
        <taxon>Arabidopsis</taxon>
    </lineage>
</organism>
<name>GUN4C_ARATH</name>
<accession>Q9LX31</accession>
<accession>Q8VZR4</accession>